<organism>
    <name type="scientific">Dictyostelium discoideum</name>
    <name type="common">Social amoeba</name>
    <dbReference type="NCBI Taxonomy" id="44689"/>
    <lineage>
        <taxon>Eukaryota</taxon>
        <taxon>Amoebozoa</taxon>
        <taxon>Evosea</taxon>
        <taxon>Eumycetozoa</taxon>
        <taxon>Dictyostelia</taxon>
        <taxon>Dictyosteliales</taxon>
        <taxon>Dictyosteliaceae</taxon>
        <taxon>Dictyostelium</taxon>
    </lineage>
</organism>
<evidence type="ECO:0000250" key="1"/>
<evidence type="ECO:0000255" key="2"/>
<evidence type="ECO:0000255" key="3">
    <source>
        <dbReference type="PROSITE-ProRule" id="PRU00108"/>
    </source>
</evidence>
<evidence type="ECO:0000255" key="4">
    <source>
        <dbReference type="PROSITE-ProRule" id="PRU00448"/>
    </source>
</evidence>
<evidence type="ECO:0000256" key="5">
    <source>
        <dbReference type="SAM" id="MobiDB-lite"/>
    </source>
</evidence>
<evidence type="ECO:0000305" key="6"/>
<gene>
    <name type="primary">hbx5-1</name>
    <name type="ORF">DDB_G0273127</name>
</gene>
<gene>
    <name type="primary">hbx5-2</name>
    <name type="ORF">DDB_G0273645</name>
</gene>
<keyword id="KW-0175">Coiled coil</keyword>
<keyword id="KW-0217">Developmental protein</keyword>
<keyword id="KW-0238">DNA-binding</keyword>
<keyword id="KW-0371">Homeobox</keyword>
<keyword id="KW-0539">Nucleus</keyword>
<keyword id="KW-1185">Reference proteome</keyword>
<keyword id="KW-0804">Transcription</keyword>
<keyword id="KW-0805">Transcription regulation</keyword>
<dbReference type="EMBL" id="AAFI02000011">
    <property type="protein sequence ID" value="EAL70513.1"/>
    <property type="molecule type" value="Genomic_DNA"/>
</dbReference>
<dbReference type="EMBL" id="AAFI02000009">
    <property type="protein sequence ID" value="EAL70781.1"/>
    <property type="molecule type" value="Genomic_DNA"/>
</dbReference>
<dbReference type="RefSeq" id="XP_644439.1">
    <property type="nucleotide sequence ID" value="XM_639347.1"/>
</dbReference>
<dbReference type="RefSeq" id="XP_644811.1">
    <property type="nucleotide sequence ID" value="XM_639719.1"/>
</dbReference>
<dbReference type="SMR" id="Q557C9"/>
<dbReference type="FunCoup" id="Q557C9">
    <property type="interactions" value="399"/>
</dbReference>
<dbReference type="STRING" id="44689.Q557C9"/>
<dbReference type="GlyGen" id="Q557C9">
    <property type="glycosylation" value="1 site"/>
</dbReference>
<dbReference type="PaxDb" id="44689-DDB0220481"/>
<dbReference type="EnsemblProtists" id="EAL70513">
    <property type="protein sequence ID" value="EAL70513"/>
    <property type="gene ID" value="DDB_G0273645"/>
</dbReference>
<dbReference type="EnsemblProtists" id="EAL70781">
    <property type="protein sequence ID" value="EAL70781"/>
    <property type="gene ID" value="DDB_G0273127"/>
</dbReference>
<dbReference type="GeneID" id="8618913"/>
<dbReference type="GeneID" id="8619064"/>
<dbReference type="KEGG" id="ddi:DDB_G0273127"/>
<dbReference type="KEGG" id="ddi:DDB_G0273645"/>
<dbReference type="dictyBase" id="DDB_G0273127">
    <property type="gene designation" value="hbx5-1"/>
</dbReference>
<dbReference type="dictyBase" id="DDB_G0273645">
    <property type="gene designation" value="hbx5-2"/>
</dbReference>
<dbReference type="VEuPathDB" id="AmoebaDB:DDB_G0273645"/>
<dbReference type="eggNOG" id="ENOG502REC7">
    <property type="taxonomic scope" value="Eukaryota"/>
</dbReference>
<dbReference type="HOGENOM" id="CLU_240221_0_0_1"/>
<dbReference type="InParanoid" id="Q557C9"/>
<dbReference type="PRO" id="PR:Q557C9"/>
<dbReference type="Proteomes" id="UP000002195">
    <property type="component" value="Chromosome 2"/>
</dbReference>
<dbReference type="GO" id="GO:0005737">
    <property type="term" value="C:cytoplasm"/>
    <property type="evidence" value="ECO:0000314"/>
    <property type="project" value="dictyBase"/>
</dbReference>
<dbReference type="GO" id="GO:0005634">
    <property type="term" value="C:nucleus"/>
    <property type="evidence" value="ECO:0000314"/>
    <property type="project" value="dictyBase"/>
</dbReference>
<dbReference type="GO" id="GO:0005509">
    <property type="term" value="F:calcium ion binding"/>
    <property type="evidence" value="ECO:0007669"/>
    <property type="project" value="InterPro"/>
</dbReference>
<dbReference type="GO" id="GO:0003677">
    <property type="term" value="F:DNA binding"/>
    <property type="evidence" value="ECO:0007669"/>
    <property type="project" value="UniProtKB-KW"/>
</dbReference>
<dbReference type="GO" id="GO:0000492">
    <property type="term" value="P:box C/D snoRNP assembly"/>
    <property type="evidence" value="ECO:0000318"/>
    <property type="project" value="GO_Central"/>
</dbReference>
<dbReference type="GO" id="GO:0010468">
    <property type="term" value="P:regulation of gene expression"/>
    <property type="evidence" value="ECO:0000315"/>
    <property type="project" value="dictyBase"/>
</dbReference>
<dbReference type="GO" id="GO:1905301">
    <property type="term" value="P:regulation of macropinocytosis"/>
    <property type="evidence" value="ECO:0000315"/>
    <property type="project" value="dictyBase"/>
</dbReference>
<dbReference type="CDD" id="cd00086">
    <property type="entry name" value="homeodomain"/>
    <property type="match status" value="1"/>
</dbReference>
<dbReference type="Gene3D" id="1.10.10.60">
    <property type="entry name" value="Homeodomain-like"/>
    <property type="match status" value="1"/>
</dbReference>
<dbReference type="InterPro" id="IPR002048">
    <property type="entry name" value="EF_hand_dom"/>
</dbReference>
<dbReference type="InterPro" id="IPR001356">
    <property type="entry name" value="HD"/>
</dbReference>
<dbReference type="InterPro" id="IPR009057">
    <property type="entry name" value="Homeodomain-like_sf"/>
</dbReference>
<dbReference type="PANTHER" id="PTHR36911:SF3">
    <property type="entry name" value="GATA ZINC FINGER DOMAIN-CONTAINING PROTEIN 4-RELATED"/>
    <property type="match status" value="1"/>
</dbReference>
<dbReference type="PANTHER" id="PTHR36911">
    <property type="entry name" value="LIM ZINC-BINDING DOMAIN-CONTAINING PROTEIN-RELATED"/>
    <property type="match status" value="1"/>
</dbReference>
<dbReference type="Pfam" id="PF00046">
    <property type="entry name" value="Homeodomain"/>
    <property type="match status" value="1"/>
</dbReference>
<dbReference type="SMART" id="SM00389">
    <property type="entry name" value="HOX"/>
    <property type="match status" value="1"/>
</dbReference>
<dbReference type="SUPFAM" id="SSF46689">
    <property type="entry name" value="Homeodomain-like"/>
    <property type="match status" value="1"/>
</dbReference>
<dbReference type="PROSITE" id="PS50222">
    <property type="entry name" value="EF_HAND_2"/>
    <property type="match status" value="1"/>
</dbReference>
<dbReference type="PROSITE" id="PS50071">
    <property type="entry name" value="HOMEOBOX_2"/>
    <property type="match status" value="1"/>
</dbReference>
<proteinExistence type="inferred from homology"/>
<reference key="1">
    <citation type="journal article" date="2002" name="Nature">
        <title>Sequence and analysis of chromosome 2 of Dictyostelium discoideum.</title>
        <authorList>
            <person name="Gloeckner G."/>
            <person name="Eichinger L."/>
            <person name="Szafranski K."/>
            <person name="Pachebat J.A."/>
            <person name="Bankier A.T."/>
            <person name="Dear P.H."/>
            <person name="Lehmann R."/>
            <person name="Baumgart C."/>
            <person name="Parra G."/>
            <person name="Abril J.F."/>
            <person name="Guigo R."/>
            <person name="Kumpf K."/>
            <person name="Tunggal B."/>
            <person name="Cox E.C."/>
            <person name="Quail M.A."/>
            <person name="Platzer M."/>
            <person name="Rosenthal A."/>
            <person name="Noegel A.A."/>
        </authorList>
    </citation>
    <scope>NUCLEOTIDE SEQUENCE [LARGE SCALE GENOMIC DNA]</scope>
    <source>
        <strain>AX4</strain>
    </source>
</reference>
<reference key="2">
    <citation type="journal article" date="2005" name="Nature">
        <title>The genome of the social amoeba Dictyostelium discoideum.</title>
        <authorList>
            <person name="Eichinger L."/>
            <person name="Pachebat J.A."/>
            <person name="Gloeckner G."/>
            <person name="Rajandream M.A."/>
            <person name="Sucgang R."/>
            <person name="Berriman M."/>
            <person name="Song J."/>
            <person name="Olsen R."/>
            <person name="Szafranski K."/>
            <person name="Xu Q."/>
            <person name="Tunggal B."/>
            <person name="Kummerfeld S."/>
            <person name="Madera M."/>
            <person name="Konfortov B.A."/>
            <person name="Rivero F."/>
            <person name="Bankier A.T."/>
            <person name="Lehmann R."/>
            <person name="Hamlin N."/>
            <person name="Davies R."/>
            <person name="Gaudet P."/>
            <person name="Fey P."/>
            <person name="Pilcher K."/>
            <person name="Chen G."/>
            <person name="Saunders D."/>
            <person name="Sodergren E.J."/>
            <person name="Davis P."/>
            <person name="Kerhornou A."/>
            <person name="Nie X."/>
            <person name="Hall N."/>
            <person name="Anjard C."/>
            <person name="Hemphill L."/>
            <person name="Bason N."/>
            <person name="Farbrother P."/>
            <person name="Desany B."/>
            <person name="Just E."/>
            <person name="Morio T."/>
            <person name="Rost R."/>
            <person name="Churcher C.M."/>
            <person name="Cooper J."/>
            <person name="Haydock S."/>
            <person name="van Driessche N."/>
            <person name="Cronin A."/>
            <person name="Goodhead I."/>
            <person name="Muzny D.M."/>
            <person name="Mourier T."/>
            <person name="Pain A."/>
            <person name="Lu M."/>
            <person name="Harper D."/>
            <person name="Lindsay R."/>
            <person name="Hauser H."/>
            <person name="James K.D."/>
            <person name="Quiles M."/>
            <person name="Madan Babu M."/>
            <person name="Saito T."/>
            <person name="Buchrieser C."/>
            <person name="Wardroper A."/>
            <person name="Felder M."/>
            <person name="Thangavelu M."/>
            <person name="Johnson D."/>
            <person name="Knights A."/>
            <person name="Loulseged H."/>
            <person name="Mungall K.L."/>
            <person name="Oliver K."/>
            <person name="Price C."/>
            <person name="Quail M.A."/>
            <person name="Urushihara H."/>
            <person name="Hernandez J."/>
            <person name="Rabbinowitsch E."/>
            <person name="Steffen D."/>
            <person name="Sanders M."/>
            <person name="Ma J."/>
            <person name="Kohara Y."/>
            <person name="Sharp S."/>
            <person name="Simmonds M.N."/>
            <person name="Spiegler S."/>
            <person name="Tivey A."/>
            <person name="Sugano S."/>
            <person name="White B."/>
            <person name="Walker D."/>
            <person name="Woodward J.R."/>
            <person name="Winckler T."/>
            <person name="Tanaka Y."/>
            <person name="Shaulsky G."/>
            <person name="Schleicher M."/>
            <person name="Weinstock G.M."/>
            <person name="Rosenthal A."/>
            <person name="Cox E.C."/>
            <person name="Chisholm R.L."/>
            <person name="Gibbs R.A."/>
            <person name="Loomis W.F."/>
            <person name="Platzer M."/>
            <person name="Kay R.R."/>
            <person name="Williams J.G."/>
            <person name="Dear P.H."/>
            <person name="Noegel A.A."/>
            <person name="Barrell B.G."/>
            <person name="Kuspa A."/>
        </authorList>
    </citation>
    <scope>NUCLEOTIDE SEQUENCE [LARGE SCALE GENOMIC DNA]</scope>
    <source>
        <strain>AX4</strain>
    </source>
</reference>
<sequence>METIVNNQNNGQQNTVPTQSFSSSVYMNYDFFDSQQLQQPQHQPQHYQQQDSFVSPNLDNNNPQIHVQSNNYNQNGFVGYNNSNNNNNNNQHMNNQYSNSFHNNNSSGFMAFQNNSSNFNNQNNNNSNNNNNNNNINSYDYNNSNNNNYNNNNNTHSNNSNNNNNNNNSNYWNNNNNNNNNNNNNNNNNNNNNNNNNNNNNSNNNNNNNNNNNHHHHHHQQQSQPTSPYNNPIQHNPNDMKFNGQHNPFNGNQMVMDNNNNNNNNNNSNVFNSNSNSNVFNSNSGSFLQINNNNGSFSSYNNNNNNNNNNNSNSNNNNNNNNNNNNNNNNNNNNNNNNNNNNNSNNNNNNQFSQSYDSTLGNNRFSSMMGQPIQQQQSPPQQQQQQSFIQSSPQAIPASNCNGNGSTSSSTSPLSPTLIGSAPGTPTSMLATTLFGFNLSSSPTSSPSSPVKKGKSQSALALSSSGGSGGSSGRKKPQKHDSMSSITNTNLKSTQASTLKESKRSNSSPNLKKQMQLQQLQQQQKLNENGTLIPPLPFASISENITNNNNNNNNNNNNNNNNNNNNNITNNPLSGSMEFPNSNNINQSSDSINGEFNIGQPESPKMYNSSPSPPPNATSTTKGGKKSKKSLHISTTQQSPSLNGSTGGSMLTPTMSGLSLSGGGSGGGFSPLISPTGTTSNKDLQSSPSPSPLLKSMSMGKLDLQDSIDSMSSPLSPNSSLSSSNGLLPPPPNSNNMNSSGGIPTPSTPTSPPPLTHHINIFSNLEFVKQLKDHLLPNDFKPEEHALERNLLRFQQFVKTLAEPLQRDVVTSMFELSVDAQLQYGSNLDNDNLSALMLFRRKILNFNLFRMMMLNDPNSFIPLPSPFPIQTTTISSNGTIVNPTNVNNNNINNNNNNNNNNNNNNNNNNNNNNNNNNNNTTTTTTTTTSANTVQSGTTSNSNLVFQQTSNSNTLSPSQQQQQQTQQQQSINGSSTGSLSDAQYQDLGIHLDTSSANSGCGINVSIGSSIGGGGGGSSLNGSNLNGSSSISGSISGGSSNGGGQFIMSPQFSLDGAYQQQQPSSYNINNEMELAEKDEDEIFNNNNKDNNNNNNNNNNNNNNNNNNNNNNNNNNNNNNSSSINSNINNVNNCNINNNSNSNNGSINSPRPSTPTTLNSSGKRSKKIYRGDSFGAGNDISTGLMASSDQIIPPPQQQQHQQLVNNNNNNMNNSENNILLADSNKGLSVSLGSLPTNTPSSMEIEQQQQQQQQQQQQQQQQHLNQQQILHQQLHHHLSSSLGGAQFTNIQQQQQQQSGNIFYNSPYNSSQVYMNPYGTSITNTSLAGPSTTSSAMQHMITNMTSSNIIVNNQNNNNNDQNNNNNNNNNNNSTTNSNVNNNNNTTNTPSSPPQPNNCTPTQTSIITSNGVVVPSLQMRGTITNPPPVLPTPDTLVLQQQQQQQQQQQQQQQQQQQQQQQQQQQQQQETPHTPTSNSISSPRSSPVHQQSPSNTNTTTTSTTTIRHSAVTQLSFAGLHNQQVSPISPRSPRSPHGTSGDYNDGSQSPSSRRKNRFTDFQIKRMNDCFENLDKNNNGKFTSEEICQIATELGLTDQQVRVFFQNKRARSRPSPRGQPTNPLTSSTNNGNNSNLALQHLQQQHLQQVQQQQQQLLQLQQQQQQQQQQLHQQSANTTPQLNSMNPNSINYNNNNNNNNNNNNNNNNNNNNNNNNNNNNNNIINNNITTINE</sequence>
<name>HBX5_DICDI</name>
<protein>
    <recommendedName>
        <fullName>Homeobox protein 5</fullName>
        <shortName>DdHbx-5</shortName>
    </recommendedName>
</protein>
<accession>Q557C9</accession>
<accession>Q8T248</accession>
<comment type="function">
    <text evidence="1">Putative transcription factor.</text>
</comment>
<comment type="subcellular location">
    <subcellularLocation>
        <location evidence="3">Nucleus</location>
    </subcellularLocation>
</comment>
<comment type="caution">
    <text evidence="6">The gene for this protein is duplicated in strains AX3 and AX4. These strains contain a duplication of a segment of 750 kb of chromosome 2 compared to the corresponding sequence in strain AX2.</text>
</comment>
<feature type="chain" id="PRO_0000388789" description="Homeobox protein 5">
    <location>
        <begin position="1"/>
        <end position="1723"/>
    </location>
</feature>
<feature type="domain" description="EF-hand" evidence="4">
    <location>
        <begin position="1553"/>
        <end position="1588"/>
    </location>
</feature>
<feature type="DNA-binding region" description="Homeobox" evidence="3">
    <location>
        <begin position="1543"/>
        <end position="1607"/>
    </location>
</feature>
<feature type="region of interest" description="Disordered" evidence="5">
    <location>
        <begin position="36"/>
        <end position="425"/>
    </location>
</feature>
<feature type="region of interest" description="Disordered" evidence="5">
    <location>
        <begin position="440"/>
        <end position="522"/>
    </location>
</feature>
<feature type="region of interest" description="Disordered" evidence="5">
    <location>
        <begin position="543"/>
        <end position="756"/>
    </location>
</feature>
<feature type="region of interest" description="Disordered" evidence="5">
    <location>
        <begin position="878"/>
        <end position="978"/>
    </location>
</feature>
<feature type="region of interest" description="Disordered" evidence="5">
    <location>
        <begin position="1080"/>
        <end position="1214"/>
    </location>
</feature>
<feature type="region of interest" description="Disordered" evidence="5">
    <location>
        <begin position="1226"/>
        <end position="1264"/>
    </location>
</feature>
<feature type="region of interest" description="Disordered" evidence="5">
    <location>
        <begin position="1345"/>
        <end position="1399"/>
    </location>
</feature>
<feature type="region of interest" description="Disordered" evidence="5">
    <location>
        <begin position="1456"/>
        <end position="1498"/>
    </location>
</feature>
<feature type="region of interest" description="Disordered" evidence="5">
    <location>
        <begin position="1513"/>
        <end position="1547"/>
    </location>
</feature>
<feature type="region of interest" description="Disordered" evidence="5">
    <location>
        <begin position="1598"/>
        <end position="1625"/>
    </location>
</feature>
<feature type="region of interest" description="Disordered" evidence="5">
    <location>
        <begin position="1661"/>
        <end position="1723"/>
    </location>
</feature>
<feature type="coiled-coil region" evidence="2">
    <location>
        <begin position="300"/>
        <end position="351"/>
    </location>
</feature>
<feature type="coiled-coil region" evidence="2">
    <location>
        <begin position="1193"/>
        <end position="1270"/>
    </location>
</feature>
<feature type="coiled-coil region" evidence="2">
    <location>
        <begin position="1431"/>
        <end position="1464"/>
    </location>
</feature>
<feature type="coiled-coil region" evidence="2">
    <location>
        <begin position="1632"/>
        <end position="1702"/>
    </location>
</feature>
<feature type="compositionally biased region" description="Low complexity" evidence="5">
    <location>
        <begin position="36"/>
        <end position="50"/>
    </location>
</feature>
<feature type="compositionally biased region" description="Polar residues" evidence="5">
    <location>
        <begin position="51"/>
        <end position="72"/>
    </location>
</feature>
<feature type="compositionally biased region" description="Low complexity" evidence="5">
    <location>
        <begin position="73"/>
        <end position="107"/>
    </location>
</feature>
<feature type="compositionally biased region" description="Low complexity" evidence="5">
    <location>
        <begin position="114"/>
        <end position="212"/>
    </location>
</feature>
<feature type="compositionally biased region" description="Polar residues" evidence="5">
    <location>
        <begin position="223"/>
        <end position="237"/>
    </location>
</feature>
<feature type="compositionally biased region" description="Polar residues" evidence="5">
    <location>
        <begin position="244"/>
        <end position="257"/>
    </location>
</feature>
<feature type="compositionally biased region" description="Low complexity" evidence="5">
    <location>
        <begin position="258"/>
        <end position="284"/>
    </location>
</feature>
<feature type="compositionally biased region" description="Low complexity" evidence="5">
    <location>
        <begin position="291"/>
        <end position="350"/>
    </location>
</feature>
<feature type="compositionally biased region" description="Polar residues" evidence="5">
    <location>
        <begin position="351"/>
        <end position="369"/>
    </location>
</feature>
<feature type="compositionally biased region" description="Low complexity" evidence="5">
    <location>
        <begin position="371"/>
        <end position="421"/>
    </location>
</feature>
<feature type="compositionally biased region" description="Low complexity" evidence="5">
    <location>
        <begin position="440"/>
        <end position="465"/>
    </location>
</feature>
<feature type="compositionally biased region" description="Polar residues" evidence="5">
    <location>
        <begin position="483"/>
        <end position="510"/>
    </location>
</feature>
<feature type="compositionally biased region" description="Low complexity" evidence="5">
    <location>
        <begin position="511"/>
        <end position="522"/>
    </location>
</feature>
<feature type="compositionally biased region" description="Low complexity" evidence="5">
    <location>
        <begin position="544"/>
        <end position="571"/>
    </location>
</feature>
<feature type="compositionally biased region" description="Low complexity" evidence="5">
    <location>
        <begin position="581"/>
        <end position="593"/>
    </location>
</feature>
<feature type="compositionally biased region" description="Polar residues" evidence="5">
    <location>
        <begin position="632"/>
        <end position="655"/>
    </location>
</feature>
<feature type="compositionally biased region" description="Gly residues" evidence="5">
    <location>
        <begin position="660"/>
        <end position="669"/>
    </location>
</feature>
<feature type="compositionally biased region" description="Polar residues" evidence="5">
    <location>
        <begin position="673"/>
        <end position="685"/>
    </location>
</feature>
<feature type="compositionally biased region" description="Low complexity" evidence="5">
    <location>
        <begin position="686"/>
        <end position="699"/>
    </location>
</feature>
<feature type="compositionally biased region" description="Low complexity" evidence="5">
    <location>
        <begin position="710"/>
        <end position="727"/>
    </location>
</feature>
<feature type="compositionally biased region" description="Low complexity" evidence="5">
    <location>
        <begin position="734"/>
        <end position="745"/>
    </location>
</feature>
<feature type="compositionally biased region" description="Pro residues" evidence="5">
    <location>
        <begin position="746"/>
        <end position="755"/>
    </location>
</feature>
<feature type="compositionally biased region" description="Low complexity" evidence="5">
    <location>
        <begin position="882"/>
        <end position="928"/>
    </location>
</feature>
<feature type="compositionally biased region" description="Polar residues" evidence="5">
    <location>
        <begin position="929"/>
        <end position="945"/>
    </location>
</feature>
<feature type="compositionally biased region" description="Low complexity" evidence="5">
    <location>
        <begin position="946"/>
        <end position="977"/>
    </location>
</feature>
<feature type="compositionally biased region" description="Low complexity" evidence="5">
    <location>
        <begin position="1082"/>
        <end position="1146"/>
    </location>
</feature>
<feature type="compositionally biased region" description="Polar residues" evidence="5">
    <location>
        <begin position="1147"/>
        <end position="1159"/>
    </location>
</feature>
<feature type="compositionally biased region" description="Polar residues" evidence="5">
    <location>
        <begin position="1176"/>
        <end position="1187"/>
    </location>
</feature>
<feature type="compositionally biased region" description="Low complexity" evidence="5">
    <location>
        <begin position="1194"/>
        <end position="1214"/>
    </location>
</feature>
<feature type="compositionally biased region" description="Polar residues" evidence="5">
    <location>
        <begin position="1226"/>
        <end position="1242"/>
    </location>
</feature>
<feature type="compositionally biased region" description="Low complexity" evidence="5">
    <location>
        <begin position="1243"/>
        <end position="1264"/>
    </location>
</feature>
<feature type="compositionally biased region" description="Low complexity" evidence="5">
    <location>
        <begin position="1347"/>
        <end position="1384"/>
    </location>
</feature>
<feature type="compositionally biased region" description="Low complexity" evidence="5">
    <location>
        <begin position="1456"/>
        <end position="1480"/>
    </location>
</feature>
<feature type="compositionally biased region" description="Low complexity" evidence="5">
    <location>
        <begin position="1487"/>
        <end position="1498"/>
    </location>
</feature>
<feature type="compositionally biased region" description="Low complexity" evidence="5">
    <location>
        <begin position="1518"/>
        <end position="1528"/>
    </location>
</feature>
<feature type="compositionally biased region" description="Polar residues" evidence="5">
    <location>
        <begin position="1529"/>
        <end position="1543"/>
    </location>
</feature>
<feature type="compositionally biased region" description="Low complexity" evidence="5">
    <location>
        <begin position="1612"/>
        <end position="1625"/>
    </location>
</feature>
<feature type="compositionally biased region" description="Polar residues" evidence="5">
    <location>
        <begin position="1665"/>
        <end position="1675"/>
    </location>
</feature>
<feature type="compositionally biased region" description="Low complexity" evidence="5">
    <location>
        <begin position="1676"/>
        <end position="1723"/>
    </location>
</feature>